<evidence type="ECO:0000255" key="1">
    <source>
        <dbReference type="PROSITE-ProRule" id="PRU00227"/>
    </source>
</evidence>
<evidence type="ECO:0000256" key="2">
    <source>
        <dbReference type="SAM" id="MobiDB-lite"/>
    </source>
</evidence>
<evidence type="ECO:0000269" key="3">
    <source>
    </source>
</evidence>
<evidence type="ECO:0000269" key="4">
    <source>
    </source>
</evidence>
<evidence type="ECO:0000305" key="5"/>
<name>ASG1_CANAL</name>
<comment type="function">
    <text evidence="3 4">Transcription factor necessary to sustain growth on non-fermentative carbon sources such as sodium acetate, acetic acid, or ethanol. Plays a role in hyphal formation.</text>
</comment>
<comment type="subcellular location">
    <subcellularLocation>
        <location evidence="1">Nucleus</location>
    </subcellularLocation>
</comment>
<comment type="disruption phenotype">
    <text evidence="4">Decreased hyphal formation.</text>
</comment>
<comment type="similarity">
    <text evidence="5">Belongs to the ASG1 family.</text>
</comment>
<organism>
    <name type="scientific">Candida albicans (strain SC5314 / ATCC MYA-2876)</name>
    <name type="common">Yeast</name>
    <dbReference type="NCBI Taxonomy" id="237561"/>
    <lineage>
        <taxon>Eukaryota</taxon>
        <taxon>Fungi</taxon>
        <taxon>Dikarya</taxon>
        <taxon>Ascomycota</taxon>
        <taxon>Saccharomycotina</taxon>
        <taxon>Pichiomycetes</taxon>
        <taxon>Debaryomycetaceae</taxon>
        <taxon>Candida/Lodderomyces clade</taxon>
        <taxon>Candida</taxon>
    </lineage>
</organism>
<dbReference type="EMBL" id="CP017630">
    <property type="protein sequence ID" value="AOW31000.1"/>
    <property type="molecule type" value="Genomic_DNA"/>
</dbReference>
<dbReference type="RefSeq" id="XP_710703.2">
    <property type="nucleotide sequence ID" value="XM_705611.2"/>
</dbReference>
<dbReference type="SMR" id="Q59LV8"/>
<dbReference type="BioGRID" id="1230780">
    <property type="interactions" value="1"/>
</dbReference>
<dbReference type="FunCoup" id="Q59LV8">
    <property type="interactions" value="316"/>
</dbReference>
<dbReference type="STRING" id="237561.Q59LV8"/>
<dbReference type="EnsemblFungi" id="CR_02560C_A-T">
    <property type="protein sequence ID" value="CR_02560C_A-T-p1"/>
    <property type="gene ID" value="CR_02560C_A"/>
</dbReference>
<dbReference type="GeneID" id="3647687"/>
<dbReference type="KEGG" id="cal:CAALFM_CR02560CA"/>
<dbReference type="CGD" id="CAL0000181714">
    <property type="gene designation" value="ASG1"/>
</dbReference>
<dbReference type="VEuPathDB" id="FungiDB:CR_02560C_A"/>
<dbReference type="eggNOG" id="ENOG502QSY2">
    <property type="taxonomic scope" value="Eukaryota"/>
</dbReference>
<dbReference type="HOGENOM" id="CLU_010084_1_0_1"/>
<dbReference type="InParanoid" id="Q59LV8"/>
<dbReference type="OrthoDB" id="422427at2759"/>
<dbReference type="PRO" id="PR:Q59LV8"/>
<dbReference type="Proteomes" id="UP000000559">
    <property type="component" value="Chromosome R"/>
</dbReference>
<dbReference type="GO" id="GO:0005634">
    <property type="term" value="C:nucleus"/>
    <property type="evidence" value="ECO:0000318"/>
    <property type="project" value="GO_Central"/>
</dbReference>
<dbReference type="GO" id="GO:0003677">
    <property type="term" value="F:DNA binding"/>
    <property type="evidence" value="ECO:0007669"/>
    <property type="project" value="UniProtKB-KW"/>
</dbReference>
<dbReference type="GO" id="GO:0000981">
    <property type="term" value="F:DNA-binding transcription factor activity, RNA polymerase II-specific"/>
    <property type="evidence" value="ECO:0007669"/>
    <property type="project" value="InterPro"/>
</dbReference>
<dbReference type="GO" id="GO:0008270">
    <property type="term" value="F:zinc ion binding"/>
    <property type="evidence" value="ECO:0007669"/>
    <property type="project" value="InterPro"/>
</dbReference>
<dbReference type="GO" id="GO:0006351">
    <property type="term" value="P:DNA-templated transcription"/>
    <property type="evidence" value="ECO:0007669"/>
    <property type="project" value="InterPro"/>
</dbReference>
<dbReference type="GO" id="GO:0030447">
    <property type="term" value="P:filamentous growth"/>
    <property type="evidence" value="ECO:0000315"/>
    <property type="project" value="CGD"/>
</dbReference>
<dbReference type="GO" id="GO:0044182">
    <property type="term" value="P:filamentous growth of a population of unicellular organisms"/>
    <property type="evidence" value="ECO:0000315"/>
    <property type="project" value="CGD"/>
</dbReference>
<dbReference type="GO" id="GO:0045944">
    <property type="term" value="P:positive regulation of transcription by RNA polymerase II"/>
    <property type="evidence" value="ECO:0000316"/>
    <property type="project" value="CGD"/>
</dbReference>
<dbReference type="GO" id="GO:1900428">
    <property type="term" value="P:regulation of filamentous growth of a population of unicellular organisms"/>
    <property type="evidence" value="ECO:0000315"/>
    <property type="project" value="CGD"/>
</dbReference>
<dbReference type="CDD" id="cd12148">
    <property type="entry name" value="fungal_TF_MHR"/>
    <property type="match status" value="1"/>
</dbReference>
<dbReference type="CDD" id="cd00067">
    <property type="entry name" value="GAL4"/>
    <property type="match status" value="1"/>
</dbReference>
<dbReference type="Gene3D" id="4.10.240.10">
    <property type="entry name" value="Zn(2)-C6 fungal-type DNA-binding domain"/>
    <property type="match status" value="1"/>
</dbReference>
<dbReference type="InterPro" id="IPR051711">
    <property type="entry name" value="Stress_Response_Reg"/>
</dbReference>
<dbReference type="InterPro" id="IPR007219">
    <property type="entry name" value="Transcription_factor_dom_fun"/>
</dbReference>
<dbReference type="InterPro" id="IPR036864">
    <property type="entry name" value="Zn2-C6_fun-type_DNA-bd_sf"/>
</dbReference>
<dbReference type="InterPro" id="IPR001138">
    <property type="entry name" value="Zn2Cys6_DnaBD"/>
</dbReference>
<dbReference type="PANTHER" id="PTHR47540:SF1">
    <property type="entry name" value="ACTIVATOR OF STRESS GENES 1-RELATED"/>
    <property type="match status" value="1"/>
</dbReference>
<dbReference type="PANTHER" id="PTHR47540">
    <property type="entry name" value="THIAMINE REPRESSIBLE GENES REGULATORY PROTEIN THI5"/>
    <property type="match status" value="1"/>
</dbReference>
<dbReference type="Pfam" id="PF04082">
    <property type="entry name" value="Fungal_trans"/>
    <property type="match status" value="1"/>
</dbReference>
<dbReference type="Pfam" id="PF00172">
    <property type="entry name" value="Zn_clus"/>
    <property type="match status" value="1"/>
</dbReference>
<dbReference type="SMART" id="SM00906">
    <property type="entry name" value="Fungal_trans"/>
    <property type="match status" value="1"/>
</dbReference>
<dbReference type="SMART" id="SM00066">
    <property type="entry name" value="GAL4"/>
    <property type="match status" value="1"/>
</dbReference>
<dbReference type="SUPFAM" id="SSF57701">
    <property type="entry name" value="Zn2/Cys6 DNA-binding domain"/>
    <property type="match status" value="1"/>
</dbReference>
<dbReference type="PROSITE" id="PS00463">
    <property type="entry name" value="ZN2_CY6_FUNGAL_1"/>
    <property type="match status" value="1"/>
</dbReference>
<dbReference type="PROSITE" id="PS50048">
    <property type="entry name" value="ZN2_CY6_FUNGAL_2"/>
    <property type="match status" value="1"/>
</dbReference>
<accession>Q59LV8</accession>
<accession>A0A1D8PS84</accession>
<accession>Q59LU4</accession>
<sequence>MPKREIEDTQSPYSSTGLVSTGESPKTSTSTPTSSTNNRAATTTTNNTSTTSTSLLKSNSNLQPIAMTPSVSSTSLAINKPKSQENKRRRVTRACDTCRQKKVKCDGKQPCIHCTVYSYKCSYDQPNIRNKKNSGIPIPSQPSPAILQVAAQAAVAFGSNNNSSNQQSLQSLQQQQQHVVHQHQHQPLPADEPIPKTNLIIFQQIINALLPKLQLNGFDPNLQFDLNKFQKVVQYVMSKSQTFTLNLNEITELMQDPDSQIPPPPPASSSSSHHRRTLSVGSFDDSSNSAVSSPREVGLHLPSKEVALNLIYTTWNKACVLFRFYHRPSLLEEVDLLYSLDPMNYGDRQQKFLPFLYSILACGSLFSKTPYTMGTPSENEKNLEDDGFKYFLEARKLIDISNVGDINSIQTVVMMIIYLQCSARLSTCYSYIGIALRSALKEGLHRNLTLFQNSKKKLDPIEEDTRKRLFYTIYKMDIYINSLLGLPRSLNEDEFDQLLPVELDDENVTRTEYLFDKQQGRLSSSGCANQHTKLMFILSHIIKKMYPIKVKPEEAENSSNVNYSRDRIHAKVTELEVELKNWLDNLPQELKPIDPSSTTKDVIDEVPEKFRLANYYLHLAFLNCQIILYRPFIHFISDSMDGSSSDPRSLIRGRNCIKVARMVVKLANKMIDHKLLLGTYWFSMYTIFFSIACLIYYFHFANYNNNGQGFNYAGILFDDDLNIDMIKKDIEIGKKVLDNLKNSSNSSLRIYNILNTMFEQLNRRTASRSRQVTATTNSTTTTANTNSNSNSNSQPTTLPANFQNVNVKNTFENFDNMNHFVKKERERERESLSQLFDNTSMAKFESSSEIPKNVANIQRVATPLEENNKEIGEVSGGNLTSNYMPGVFDKLDTQIFGKILPPYMLEKNETMNYNSNNNNSNNVNNNFNNNNNAGEVNNNSNGVAYNNNAANWPLNNAEDGLNLEDLFGTLGNNGNGGTSSSNGLEYLDPF</sequence>
<reference key="1">
    <citation type="journal article" date="2004" name="Proc. Natl. Acad. Sci. U.S.A.">
        <title>The diploid genome sequence of Candida albicans.</title>
        <authorList>
            <person name="Jones T."/>
            <person name="Federspiel N.A."/>
            <person name="Chibana H."/>
            <person name="Dungan J."/>
            <person name="Kalman S."/>
            <person name="Magee B.B."/>
            <person name="Newport G."/>
            <person name="Thorstenson Y.R."/>
            <person name="Agabian N."/>
            <person name="Magee P.T."/>
            <person name="Davis R.W."/>
            <person name="Scherer S."/>
        </authorList>
    </citation>
    <scope>NUCLEOTIDE SEQUENCE [LARGE SCALE GENOMIC DNA]</scope>
    <source>
        <strain>SC5314 / ATCC MYA-2876</strain>
    </source>
</reference>
<reference key="2">
    <citation type="journal article" date="2007" name="Genome Biol.">
        <title>Assembly of the Candida albicans genome into sixteen supercontigs aligned on the eight chromosomes.</title>
        <authorList>
            <person name="van het Hoog M."/>
            <person name="Rast T.J."/>
            <person name="Martchenko M."/>
            <person name="Grindle S."/>
            <person name="Dignard D."/>
            <person name="Hogues H."/>
            <person name="Cuomo C."/>
            <person name="Berriman M."/>
            <person name="Scherer S."/>
            <person name="Magee B.B."/>
            <person name="Whiteway M."/>
            <person name="Chibana H."/>
            <person name="Nantel A."/>
            <person name="Magee P.T."/>
        </authorList>
    </citation>
    <scope>GENOME REANNOTATION</scope>
    <source>
        <strain>SC5314 / ATCC MYA-2876</strain>
    </source>
</reference>
<reference key="3">
    <citation type="journal article" date="2013" name="Genome Biol.">
        <title>Assembly of a phased diploid Candida albicans genome facilitates allele-specific measurements and provides a simple model for repeat and indel structure.</title>
        <authorList>
            <person name="Muzzey D."/>
            <person name="Schwartz K."/>
            <person name="Weissman J.S."/>
            <person name="Sherlock G."/>
        </authorList>
    </citation>
    <scope>NUCLEOTIDE SEQUENCE [LARGE SCALE GENOMIC DNA]</scope>
    <scope>GENOME REANNOTATION</scope>
    <source>
        <strain>SC5314 / ATCC MYA-2876</strain>
    </source>
</reference>
<reference key="4">
    <citation type="journal article" date="2005" name="Comp. Funct. Genomics">
        <title>In silico analysis for transcription factors with Zn(II)(2)C(6) binuclear cluster DNA-binding domains in Candida albicans.</title>
        <authorList>
            <person name="Maicas S."/>
            <person name="Moreno I."/>
            <person name="Nieto A."/>
            <person name="Gomez M."/>
            <person name="Sentandreu R."/>
            <person name="Valentin E."/>
        </authorList>
    </citation>
    <scope>IDENTIFICATION</scope>
</reference>
<reference key="5">
    <citation type="journal article" date="2008" name="Microbiology">
        <title>Divergent functions of three Candida albicans zinc-cluster transcription factors (CTA4, ASG1 and CTF1) complementing pleiotropic drug resistance in Saccharomyces cerevisiae.</title>
        <authorList>
            <person name="Coste A.T."/>
            <person name="Ramsdale M."/>
            <person name="Ischer F."/>
            <person name="Sanglard D."/>
        </authorList>
    </citation>
    <scope>FUNCTION</scope>
</reference>
<reference key="6">
    <citation type="journal article" date="2011" name="PLoS ONE">
        <title>In vivo systematic analysis of Candida albicans Zn2-Cys6 transcription factors mutants for mice organ colonization.</title>
        <authorList>
            <person name="Vandeputte P."/>
            <person name="Ischer F."/>
            <person name="Sanglard D."/>
            <person name="Coste A.T."/>
        </authorList>
    </citation>
    <scope>FUNCTION</scope>
    <scope>DISRUPTION PHENOTYPE</scope>
</reference>
<protein>
    <recommendedName>
        <fullName>Activator of stress genes protein 1</fullName>
    </recommendedName>
</protein>
<keyword id="KW-0238">DNA-binding</keyword>
<keyword id="KW-0479">Metal-binding</keyword>
<keyword id="KW-0539">Nucleus</keyword>
<keyword id="KW-0597">Phosphoprotein</keyword>
<keyword id="KW-1185">Reference proteome</keyword>
<keyword id="KW-0346">Stress response</keyword>
<keyword id="KW-0804">Transcription</keyword>
<keyword id="KW-0805">Transcription regulation</keyword>
<keyword id="KW-0862">Zinc</keyword>
<feature type="chain" id="PRO_0000426052" description="Activator of stress genes protein 1">
    <location>
        <begin position="1"/>
        <end position="990"/>
    </location>
</feature>
<feature type="DNA-binding region" description="Zn(2)-C6 fungal-type" evidence="1">
    <location>
        <begin position="95"/>
        <end position="121"/>
    </location>
</feature>
<feature type="region of interest" description="Disordered" evidence="2">
    <location>
        <begin position="1"/>
        <end position="88"/>
    </location>
</feature>
<feature type="region of interest" description="Disordered" evidence="2">
    <location>
        <begin position="160"/>
        <end position="192"/>
    </location>
</feature>
<feature type="region of interest" description="Disordered" evidence="2">
    <location>
        <begin position="255"/>
        <end position="295"/>
    </location>
</feature>
<feature type="region of interest" description="Disordered" evidence="2">
    <location>
        <begin position="764"/>
        <end position="800"/>
    </location>
</feature>
<feature type="region of interest" description="Disordered" evidence="2">
    <location>
        <begin position="915"/>
        <end position="944"/>
    </location>
</feature>
<feature type="compositionally biased region" description="Polar residues" evidence="2">
    <location>
        <begin position="9"/>
        <end position="23"/>
    </location>
</feature>
<feature type="compositionally biased region" description="Low complexity" evidence="2">
    <location>
        <begin position="24"/>
        <end position="61"/>
    </location>
</feature>
<feature type="compositionally biased region" description="Low complexity" evidence="2">
    <location>
        <begin position="160"/>
        <end position="179"/>
    </location>
</feature>
<feature type="compositionally biased region" description="Low complexity" evidence="2">
    <location>
        <begin position="282"/>
        <end position="293"/>
    </location>
</feature>
<feature type="compositionally biased region" description="Low complexity" evidence="2">
    <location>
        <begin position="773"/>
        <end position="793"/>
    </location>
</feature>
<proteinExistence type="inferred from homology"/>
<gene>
    <name type="primary">ASG1</name>
    <name type="ordered locus">CAALFM_CR02560CA</name>
    <name type="ORF">CaO19.166</name>
    <name type="ORF">CaO19.7800</name>
</gene>